<proteinExistence type="inferred from homology"/>
<protein>
    <recommendedName>
        <fullName evidence="1">Chaperone protein DnaJ</fullName>
    </recommendedName>
</protein>
<evidence type="ECO:0000255" key="1">
    <source>
        <dbReference type="HAMAP-Rule" id="MF_01152"/>
    </source>
</evidence>
<comment type="function">
    <text evidence="1">Participates actively in the response to hyperosmotic and heat shock by preventing the aggregation of stress-denatured proteins and by disaggregating proteins, also in an autonomous, DnaK-independent fashion. Unfolded proteins bind initially to DnaJ; upon interaction with the DnaJ-bound protein, DnaK hydrolyzes its bound ATP, resulting in the formation of a stable complex. GrpE releases ADP from DnaK; ATP binding to DnaK triggers the release of the substrate protein, thus completing the reaction cycle. Several rounds of ATP-dependent interactions between DnaJ, DnaK and GrpE are required for fully efficient folding. Also involved, together with DnaK and GrpE, in the DNA replication of plasmids through activation of initiation proteins.</text>
</comment>
<comment type="cofactor">
    <cofactor evidence="1">
        <name>Zn(2+)</name>
        <dbReference type="ChEBI" id="CHEBI:29105"/>
    </cofactor>
    <text evidence="1">Binds 2 Zn(2+) ions per monomer.</text>
</comment>
<comment type="subunit">
    <text evidence="1">Homodimer.</text>
</comment>
<comment type="subcellular location">
    <subcellularLocation>
        <location evidence="1">Cytoplasm</location>
    </subcellularLocation>
</comment>
<comment type="domain">
    <text evidence="1">The J domain is necessary and sufficient to stimulate DnaK ATPase activity. Zinc center 1 plays an important role in the autonomous, DnaK-independent chaperone activity of DnaJ. Zinc center 2 is essential for interaction with DnaK and for DnaJ activity.</text>
</comment>
<comment type="similarity">
    <text evidence="1">Belongs to the DnaJ family.</text>
</comment>
<feature type="chain" id="PRO_0000070888" description="Chaperone protein DnaJ">
    <location>
        <begin position="1"/>
        <end position="379"/>
    </location>
</feature>
<feature type="domain" description="J" evidence="1">
    <location>
        <begin position="5"/>
        <end position="69"/>
    </location>
</feature>
<feature type="repeat" description="CXXCXGXG motif">
    <location>
        <begin position="149"/>
        <end position="156"/>
    </location>
</feature>
<feature type="repeat" description="CXXCXGXG motif">
    <location>
        <begin position="166"/>
        <end position="173"/>
    </location>
</feature>
<feature type="repeat" description="CXXCXGXG motif">
    <location>
        <begin position="192"/>
        <end position="199"/>
    </location>
</feature>
<feature type="repeat" description="CXXCXGXG motif">
    <location>
        <begin position="206"/>
        <end position="213"/>
    </location>
</feature>
<feature type="zinc finger region" description="CR-type" evidence="1">
    <location>
        <begin position="136"/>
        <end position="218"/>
    </location>
</feature>
<feature type="binding site" evidence="1">
    <location>
        <position position="149"/>
    </location>
    <ligand>
        <name>Zn(2+)</name>
        <dbReference type="ChEBI" id="CHEBI:29105"/>
        <label>1</label>
    </ligand>
</feature>
<feature type="binding site" evidence="1">
    <location>
        <position position="152"/>
    </location>
    <ligand>
        <name>Zn(2+)</name>
        <dbReference type="ChEBI" id="CHEBI:29105"/>
        <label>1</label>
    </ligand>
</feature>
<feature type="binding site" evidence="1">
    <location>
        <position position="166"/>
    </location>
    <ligand>
        <name>Zn(2+)</name>
        <dbReference type="ChEBI" id="CHEBI:29105"/>
        <label>2</label>
    </ligand>
</feature>
<feature type="binding site" evidence="1">
    <location>
        <position position="169"/>
    </location>
    <ligand>
        <name>Zn(2+)</name>
        <dbReference type="ChEBI" id="CHEBI:29105"/>
        <label>2</label>
    </ligand>
</feature>
<feature type="binding site" evidence="1">
    <location>
        <position position="192"/>
    </location>
    <ligand>
        <name>Zn(2+)</name>
        <dbReference type="ChEBI" id="CHEBI:29105"/>
        <label>2</label>
    </ligand>
</feature>
<feature type="binding site" evidence="1">
    <location>
        <position position="195"/>
    </location>
    <ligand>
        <name>Zn(2+)</name>
        <dbReference type="ChEBI" id="CHEBI:29105"/>
        <label>2</label>
    </ligand>
</feature>
<feature type="binding site" evidence="1">
    <location>
        <position position="206"/>
    </location>
    <ligand>
        <name>Zn(2+)</name>
        <dbReference type="ChEBI" id="CHEBI:29105"/>
        <label>1</label>
    </ligand>
</feature>
<feature type="binding site" evidence="1">
    <location>
        <position position="209"/>
    </location>
    <ligand>
        <name>Zn(2+)</name>
        <dbReference type="ChEBI" id="CHEBI:29105"/>
        <label>1</label>
    </ligand>
</feature>
<sequence>MAKRDYYEVLGISKDASKDEIKKAYRKLSKKYHPDINKEEGADEKFKEISEAYEVLSDDNKRATIDQFGHDGPQGFGGQGFNGSDFGGFSGFGGGGFEDIFSSFFGGGSQRDPNAPQKGDDLQYTMTLTFEEAVFGTTKEISIRKDVTCETCHGDGAKPGTSKKTCSYCNGAGHVAVEQNTILGRVRTEQVCPKCNGSGQEFEEACPTCHGKGTENKTVKLEVKVPEGVDNEQQIRLAGEGSPGVNGGPAGDLYVVFRVKPSETFKRDGDDIYYKLNVSFPQAALGDEIKIPTLNNEVMLTIPAGTQTGKQFRLKEKGIKNVHGYGYGDLYVDIKVVTPTKLTDRQKELMKEFAQLNGEEINEQPSNFKDRAKRFFKGE</sequence>
<organism>
    <name type="scientific">Staphylococcus aureus</name>
    <dbReference type="NCBI Taxonomy" id="1280"/>
    <lineage>
        <taxon>Bacteria</taxon>
        <taxon>Bacillati</taxon>
        <taxon>Bacillota</taxon>
        <taxon>Bacilli</taxon>
        <taxon>Bacillales</taxon>
        <taxon>Staphylococcaceae</taxon>
        <taxon>Staphylococcus</taxon>
    </lineage>
</organism>
<accession>P45555</accession>
<keyword id="KW-0143">Chaperone</keyword>
<keyword id="KW-0963">Cytoplasm</keyword>
<keyword id="KW-0235">DNA replication</keyword>
<keyword id="KW-0479">Metal-binding</keyword>
<keyword id="KW-0677">Repeat</keyword>
<keyword id="KW-0346">Stress response</keyword>
<keyword id="KW-0862">Zinc</keyword>
<keyword id="KW-0863">Zinc-finger</keyword>
<name>DNAJ_STAAU</name>
<gene>
    <name evidence="1" type="primary">dnaJ</name>
</gene>
<reference key="1">
    <citation type="journal article" date="1994" name="J. Bacteriol.">
        <title>Molecular cloning of two new heat shock genes related to the hsp70 genes in Staphylococcus aureus.</title>
        <authorList>
            <person name="Ohta T."/>
            <person name="Saito K."/>
            <person name="Kuroda M."/>
            <person name="Honda K."/>
            <person name="Hirata H."/>
            <person name="Hayashi H."/>
        </authorList>
    </citation>
    <scope>NUCLEOTIDE SEQUENCE [GENOMIC DNA]</scope>
    <source>
        <strain>912</strain>
    </source>
</reference>
<dbReference type="EMBL" id="D30690">
    <property type="protein sequence ID" value="BAA06360.1"/>
    <property type="molecule type" value="Genomic_DNA"/>
</dbReference>
<dbReference type="SMR" id="P45555"/>
<dbReference type="GO" id="GO:0005737">
    <property type="term" value="C:cytoplasm"/>
    <property type="evidence" value="ECO:0007669"/>
    <property type="project" value="UniProtKB-SubCell"/>
</dbReference>
<dbReference type="GO" id="GO:0005524">
    <property type="term" value="F:ATP binding"/>
    <property type="evidence" value="ECO:0007669"/>
    <property type="project" value="InterPro"/>
</dbReference>
<dbReference type="GO" id="GO:0031072">
    <property type="term" value="F:heat shock protein binding"/>
    <property type="evidence" value="ECO:0007669"/>
    <property type="project" value="InterPro"/>
</dbReference>
<dbReference type="GO" id="GO:0051082">
    <property type="term" value="F:unfolded protein binding"/>
    <property type="evidence" value="ECO:0007669"/>
    <property type="project" value="UniProtKB-UniRule"/>
</dbReference>
<dbReference type="GO" id="GO:0008270">
    <property type="term" value="F:zinc ion binding"/>
    <property type="evidence" value="ECO:0007669"/>
    <property type="project" value="UniProtKB-UniRule"/>
</dbReference>
<dbReference type="GO" id="GO:0051085">
    <property type="term" value="P:chaperone cofactor-dependent protein refolding"/>
    <property type="evidence" value="ECO:0007669"/>
    <property type="project" value="TreeGrafter"/>
</dbReference>
<dbReference type="GO" id="GO:0006260">
    <property type="term" value="P:DNA replication"/>
    <property type="evidence" value="ECO:0007669"/>
    <property type="project" value="UniProtKB-KW"/>
</dbReference>
<dbReference type="GO" id="GO:0042026">
    <property type="term" value="P:protein refolding"/>
    <property type="evidence" value="ECO:0007669"/>
    <property type="project" value="TreeGrafter"/>
</dbReference>
<dbReference type="GO" id="GO:0009408">
    <property type="term" value="P:response to heat"/>
    <property type="evidence" value="ECO:0007669"/>
    <property type="project" value="InterPro"/>
</dbReference>
<dbReference type="CDD" id="cd06257">
    <property type="entry name" value="DnaJ"/>
    <property type="match status" value="1"/>
</dbReference>
<dbReference type="CDD" id="cd10747">
    <property type="entry name" value="DnaJ_C"/>
    <property type="match status" value="1"/>
</dbReference>
<dbReference type="CDD" id="cd10719">
    <property type="entry name" value="DnaJ_zf"/>
    <property type="match status" value="1"/>
</dbReference>
<dbReference type="FunFam" id="1.10.287.110:FF:000031">
    <property type="entry name" value="Molecular chaperone DnaJ"/>
    <property type="match status" value="1"/>
</dbReference>
<dbReference type="FunFam" id="2.10.230.10:FF:000002">
    <property type="entry name" value="Molecular chaperone DnaJ"/>
    <property type="match status" value="1"/>
</dbReference>
<dbReference type="FunFam" id="2.60.260.20:FF:000004">
    <property type="entry name" value="Molecular chaperone DnaJ"/>
    <property type="match status" value="1"/>
</dbReference>
<dbReference type="Gene3D" id="1.10.287.110">
    <property type="entry name" value="DnaJ domain"/>
    <property type="match status" value="1"/>
</dbReference>
<dbReference type="Gene3D" id="2.10.230.10">
    <property type="entry name" value="Heat shock protein DnaJ, cysteine-rich domain"/>
    <property type="match status" value="1"/>
</dbReference>
<dbReference type="Gene3D" id="2.60.260.20">
    <property type="entry name" value="Urease metallochaperone UreE, N-terminal domain"/>
    <property type="match status" value="2"/>
</dbReference>
<dbReference type="HAMAP" id="MF_01152">
    <property type="entry name" value="DnaJ"/>
    <property type="match status" value="1"/>
</dbReference>
<dbReference type="InterPro" id="IPR012724">
    <property type="entry name" value="DnaJ"/>
</dbReference>
<dbReference type="InterPro" id="IPR002939">
    <property type="entry name" value="DnaJ_C"/>
</dbReference>
<dbReference type="InterPro" id="IPR001623">
    <property type="entry name" value="DnaJ_domain"/>
</dbReference>
<dbReference type="InterPro" id="IPR018253">
    <property type="entry name" value="DnaJ_domain_CS"/>
</dbReference>
<dbReference type="InterPro" id="IPR008971">
    <property type="entry name" value="HSP40/DnaJ_pept-bd"/>
</dbReference>
<dbReference type="InterPro" id="IPR001305">
    <property type="entry name" value="HSP_DnaJ_Cys-rich_dom"/>
</dbReference>
<dbReference type="InterPro" id="IPR036410">
    <property type="entry name" value="HSP_DnaJ_Cys-rich_dom_sf"/>
</dbReference>
<dbReference type="InterPro" id="IPR036869">
    <property type="entry name" value="J_dom_sf"/>
</dbReference>
<dbReference type="NCBIfam" id="TIGR02349">
    <property type="entry name" value="DnaJ_bact"/>
    <property type="match status" value="1"/>
</dbReference>
<dbReference type="NCBIfam" id="NF008035">
    <property type="entry name" value="PRK10767.1"/>
    <property type="match status" value="1"/>
</dbReference>
<dbReference type="NCBIfam" id="NF010873">
    <property type="entry name" value="PRK14280.1"/>
    <property type="match status" value="1"/>
</dbReference>
<dbReference type="PANTHER" id="PTHR43096:SF48">
    <property type="entry name" value="CHAPERONE PROTEIN DNAJ"/>
    <property type="match status" value="1"/>
</dbReference>
<dbReference type="PANTHER" id="PTHR43096">
    <property type="entry name" value="DNAJ HOMOLOG 1, MITOCHONDRIAL-RELATED"/>
    <property type="match status" value="1"/>
</dbReference>
<dbReference type="Pfam" id="PF00226">
    <property type="entry name" value="DnaJ"/>
    <property type="match status" value="1"/>
</dbReference>
<dbReference type="Pfam" id="PF01556">
    <property type="entry name" value="DnaJ_C"/>
    <property type="match status" value="1"/>
</dbReference>
<dbReference type="Pfam" id="PF00684">
    <property type="entry name" value="DnaJ_CXXCXGXG"/>
    <property type="match status" value="1"/>
</dbReference>
<dbReference type="PRINTS" id="PR00625">
    <property type="entry name" value="JDOMAIN"/>
</dbReference>
<dbReference type="SMART" id="SM00271">
    <property type="entry name" value="DnaJ"/>
    <property type="match status" value="1"/>
</dbReference>
<dbReference type="SUPFAM" id="SSF46565">
    <property type="entry name" value="Chaperone J-domain"/>
    <property type="match status" value="1"/>
</dbReference>
<dbReference type="SUPFAM" id="SSF57938">
    <property type="entry name" value="DnaJ/Hsp40 cysteine-rich domain"/>
    <property type="match status" value="1"/>
</dbReference>
<dbReference type="SUPFAM" id="SSF49493">
    <property type="entry name" value="HSP40/DnaJ peptide-binding domain"/>
    <property type="match status" value="2"/>
</dbReference>
<dbReference type="PROSITE" id="PS00636">
    <property type="entry name" value="DNAJ_1"/>
    <property type="match status" value="1"/>
</dbReference>
<dbReference type="PROSITE" id="PS50076">
    <property type="entry name" value="DNAJ_2"/>
    <property type="match status" value="1"/>
</dbReference>
<dbReference type="PROSITE" id="PS51188">
    <property type="entry name" value="ZF_CR"/>
    <property type="match status" value="1"/>
</dbReference>